<dbReference type="EC" id="2.7.7.1" evidence="1"/>
<dbReference type="EMBL" id="CP000660">
    <property type="protein sequence ID" value="ABP50006.1"/>
    <property type="molecule type" value="Genomic_DNA"/>
</dbReference>
<dbReference type="SMR" id="A4WHY9"/>
<dbReference type="STRING" id="340102.Pars_0405"/>
<dbReference type="KEGG" id="pas:Pars_0405"/>
<dbReference type="HOGENOM" id="CLU_108783_0_0_2"/>
<dbReference type="OrthoDB" id="264480at2157"/>
<dbReference type="PhylomeDB" id="A4WHY9"/>
<dbReference type="UniPathway" id="UPA00253">
    <property type="reaction ID" value="UER00600"/>
</dbReference>
<dbReference type="Proteomes" id="UP000001567">
    <property type="component" value="Chromosome"/>
</dbReference>
<dbReference type="GO" id="GO:0005737">
    <property type="term" value="C:cytoplasm"/>
    <property type="evidence" value="ECO:0007669"/>
    <property type="project" value="UniProtKB-SubCell"/>
</dbReference>
<dbReference type="GO" id="GO:0005524">
    <property type="term" value="F:ATP binding"/>
    <property type="evidence" value="ECO:0007669"/>
    <property type="project" value="UniProtKB-KW"/>
</dbReference>
<dbReference type="GO" id="GO:0000309">
    <property type="term" value="F:nicotinamide-nucleotide adenylyltransferase activity"/>
    <property type="evidence" value="ECO:0007669"/>
    <property type="project" value="UniProtKB-UniRule"/>
</dbReference>
<dbReference type="GO" id="GO:0009435">
    <property type="term" value="P:NAD biosynthetic process"/>
    <property type="evidence" value="ECO:0007669"/>
    <property type="project" value="UniProtKB-UniRule"/>
</dbReference>
<dbReference type="CDD" id="cd02166">
    <property type="entry name" value="NMNAT_Archaea"/>
    <property type="match status" value="1"/>
</dbReference>
<dbReference type="Gene3D" id="3.40.50.620">
    <property type="entry name" value="HUPs"/>
    <property type="match status" value="1"/>
</dbReference>
<dbReference type="HAMAP" id="MF_00243">
    <property type="entry name" value="NMN_adenylyltr"/>
    <property type="match status" value="1"/>
</dbReference>
<dbReference type="InterPro" id="IPR004821">
    <property type="entry name" value="Cyt_trans-like"/>
</dbReference>
<dbReference type="InterPro" id="IPR006418">
    <property type="entry name" value="NMN_Atrans_arc"/>
</dbReference>
<dbReference type="InterPro" id="IPR014729">
    <property type="entry name" value="Rossmann-like_a/b/a_fold"/>
</dbReference>
<dbReference type="NCBIfam" id="TIGR01527">
    <property type="entry name" value="arch_NMN_Atrans"/>
    <property type="match status" value="1"/>
</dbReference>
<dbReference type="NCBIfam" id="TIGR00125">
    <property type="entry name" value="cyt_tran_rel"/>
    <property type="match status" value="1"/>
</dbReference>
<dbReference type="NCBIfam" id="NF002243">
    <property type="entry name" value="PRK01153.1"/>
    <property type="match status" value="1"/>
</dbReference>
<dbReference type="PANTHER" id="PTHR21342:SF0">
    <property type="entry name" value="BIFUNCTIONAL NMN ADENYLYLTRANSFERASE_NUDIX HYDROLASE"/>
    <property type="match status" value="1"/>
</dbReference>
<dbReference type="PANTHER" id="PTHR21342">
    <property type="entry name" value="PHOSPHOPANTETHEINE ADENYLYLTRANSFERASE"/>
    <property type="match status" value="1"/>
</dbReference>
<dbReference type="Pfam" id="PF01467">
    <property type="entry name" value="CTP_transf_like"/>
    <property type="match status" value="1"/>
</dbReference>
<dbReference type="SUPFAM" id="SSF52374">
    <property type="entry name" value="Nucleotidylyl transferase"/>
    <property type="match status" value="1"/>
</dbReference>
<reference key="1">
    <citation type="submission" date="2007-04" db="EMBL/GenBank/DDBJ databases">
        <title>Complete sequence of Pyrobaculum arsenaticum DSM 13514.</title>
        <authorList>
            <consortium name="US DOE Joint Genome Institute"/>
            <person name="Copeland A."/>
            <person name="Lucas S."/>
            <person name="Lapidus A."/>
            <person name="Barry K."/>
            <person name="Glavina del Rio T."/>
            <person name="Dalin E."/>
            <person name="Tice H."/>
            <person name="Pitluck S."/>
            <person name="Chain P."/>
            <person name="Malfatti S."/>
            <person name="Shin M."/>
            <person name="Vergez L."/>
            <person name="Schmutz J."/>
            <person name="Larimer F."/>
            <person name="Land M."/>
            <person name="Hauser L."/>
            <person name="Kyrpides N."/>
            <person name="Mikhailova N."/>
            <person name="Cozen A.E."/>
            <person name="Fitz-Gibbon S.T."/>
            <person name="House C.H."/>
            <person name="Saltikov C."/>
            <person name="Lowe T.M."/>
            <person name="Richardson P."/>
        </authorList>
    </citation>
    <scope>NUCLEOTIDE SEQUENCE [LARGE SCALE GENOMIC DNA]</scope>
    <source>
        <strain>ATCC 700994 / DSM 13514 / JCM 11321 / PZ6</strain>
    </source>
</reference>
<comment type="catalytic activity">
    <reaction evidence="1">
        <text>beta-nicotinamide D-ribonucleotide + ATP + H(+) = diphosphate + NAD(+)</text>
        <dbReference type="Rhea" id="RHEA:21360"/>
        <dbReference type="ChEBI" id="CHEBI:14649"/>
        <dbReference type="ChEBI" id="CHEBI:15378"/>
        <dbReference type="ChEBI" id="CHEBI:30616"/>
        <dbReference type="ChEBI" id="CHEBI:33019"/>
        <dbReference type="ChEBI" id="CHEBI:57540"/>
        <dbReference type="EC" id="2.7.7.1"/>
    </reaction>
</comment>
<comment type="pathway">
    <text evidence="1">Cofactor biosynthesis; NAD(+) biosynthesis; NAD(+) from nicotinamide D-ribonucleotide: step 1/1.</text>
</comment>
<comment type="subcellular location">
    <subcellularLocation>
        <location evidence="1">Cytoplasm</location>
    </subcellularLocation>
</comment>
<comment type="similarity">
    <text evidence="1">Belongs to the archaeal NMN adenylyltransferase family.</text>
</comment>
<feature type="chain" id="PRO_1000005742" description="Nicotinamide-nucleotide adenylyltransferase">
    <location>
        <begin position="1"/>
        <end position="178"/>
    </location>
</feature>
<protein>
    <recommendedName>
        <fullName evidence="1">Nicotinamide-nucleotide adenylyltransferase</fullName>
        <ecNumber evidence="1">2.7.7.1</ecNumber>
    </recommendedName>
    <alternativeName>
        <fullName evidence="1">NAD(+) diphosphorylase</fullName>
    </alternativeName>
    <alternativeName>
        <fullName evidence="1">NAD(+) pyrophosphorylase</fullName>
    </alternativeName>
    <alternativeName>
        <fullName evidence="1">NMN adenylyltransferase</fullName>
    </alternativeName>
</protein>
<organism>
    <name type="scientific">Pyrobaculum arsenaticum (strain DSM 13514 / JCM 11321 / PZ6)</name>
    <dbReference type="NCBI Taxonomy" id="340102"/>
    <lineage>
        <taxon>Archaea</taxon>
        <taxon>Thermoproteota</taxon>
        <taxon>Thermoprotei</taxon>
        <taxon>Thermoproteales</taxon>
        <taxon>Thermoproteaceae</taxon>
        <taxon>Pyrobaculum</taxon>
    </lineage>
</organism>
<sequence>MVRGLFPGRFQPPHWGHIYAVKEILKEVDEVIIAMGSAQFNYLLKDPFTAGERIWMLREGLREGGVDLSRVVIIPIPNVENNLEWLGRVKSYTPPFDVIYTGNPFVALLFREAGYEVRQQPMFQRERYSSTRVRELLLRGDPSWEELVPKSVAEIIKKLRGAERIKTAASGEAEPHKW</sequence>
<name>NADM_PYRAR</name>
<keyword id="KW-0067">ATP-binding</keyword>
<keyword id="KW-0963">Cytoplasm</keyword>
<keyword id="KW-0520">NAD</keyword>
<keyword id="KW-0547">Nucleotide-binding</keyword>
<keyword id="KW-0548">Nucleotidyltransferase</keyword>
<keyword id="KW-0662">Pyridine nucleotide biosynthesis</keyword>
<keyword id="KW-0808">Transferase</keyword>
<accession>A4WHY9</accession>
<gene>
    <name type="ordered locus">Pars_0405</name>
</gene>
<proteinExistence type="inferred from homology"/>
<evidence type="ECO:0000255" key="1">
    <source>
        <dbReference type="HAMAP-Rule" id="MF_00243"/>
    </source>
</evidence>